<organism>
    <name type="scientific">Phyllomedusa trinitatis</name>
    <name type="common">Trinidad leaf frog</name>
    <dbReference type="NCBI Taxonomy" id="332092"/>
    <lineage>
        <taxon>Eukaryota</taxon>
        <taxon>Metazoa</taxon>
        <taxon>Chordata</taxon>
        <taxon>Craniata</taxon>
        <taxon>Vertebrata</taxon>
        <taxon>Euteleostomi</taxon>
        <taxon>Amphibia</taxon>
        <taxon>Batrachia</taxon>
        <taxon>Anura</taxon>
        <taxon>Neobatrachia</taxon>
        <taxon>Hyloidea</taxon>
        <taxon>Hylidae</taxon>
        <taxon>Phyllomedusinae</taxon>
        <taxon>Phyllomedusa</taxon>
    </lineage>
</organism>
<reference key="1">
    <citation type="journal article" date="2018" name="Comp. Biochem. Physiol.">
        <title>Peptidomic analysis of the host-defense peptides in skin secretions of the Trinidadian leaf frog Phyllomedusa trinitatis (Phyllomedusidae).</title>
        <authorList>
            <person name="Mechkarska M."/>
            <person name="Coquet L."/>
            <person name="Leprince J."/>
            <person name="Auguste R.J."/>
            <person name="Jouenne T."/>
            <person name="Mangoni M.L."/>
            <person name="Conlon J.M."/>
        </authorList>
    </citation>
    <scope>PROTEIN SEQUENCE</scope>
    <scope>FUNCTION</scope>
    <scope>SYNTHESIS</scope>
    <scope>SUBCELLULAR LOCATION</scope>
    <scope>MASS SPECTROMETRY</scope>
    <scope>AMIDATION AT LEU-19</scope>
    <source>
        <tissue>Skin secretion</tissue>
    </source>
</reference>
<reference key="2">
    <citation type="journal article" date="2019" name="J. Pept. Sci.">
        <title>Immunomodulatory, insulinotropic, and cytotoxic activities of phylloseptins and plasticin-TR from the Trinidanian leaf frog Phyllomedusa trinitatis.</title>
        <authorList>
            <person name="Pantic J."/>
            <person name="Guilhaudis L."/>
            <person name="Musale V."/>
            <person name="Attoub S."/>
            <person name="Lukic M.L."/>
            <person name="Mechkarska M."/>
            <person name="Conlon J.M."/>
        </authorList>
    </citation>
    <scope>FUNCTION</scope>
    <scope>SYNTHESIS</scope>
</reference>
<dbReference type="GO" id="GO:0005576">
    <property type="term" value="C:extracellular region"/>
    <property type="evidence" value="ECO:0007669"/>
    <property type="project" value="UniProtKB-SubCell"/>
</dbReference>
<dbReference type="GO" id="GO:0042742">
    <property type="term" value="P:defense response to bacterium"/>
    <property type="evidence" value="ECO:0007669"/>
    <property type="project" value="UniProtKB-KW"/>
</dbReference>
<dbReference type="GO" id="GO:0050832">
    <property type="term" value="P:defense response to fungus"/>
    <property type="evidence" value="ECO:0007669"/>
    <property type="project" value="UniProtKB-KW"/>
</dbReference>
<dbReference type="GO" id="GO:0045087">
    <property type="term" value="P:innate immune response"/>
    <property type="evidence" value="ECO:0007669"/>
    <property type="project" value="UniProtKB-KW"/>
</dbReference>
<dbReference type="GO" id="GO:0031640">
    <property type="term" value="P:killing of cells of another organism"/>
    <property type="evidence" value="ECO:0007669"/>
    <property type="project" value="UniProtKB-KW"/>
</dbReference>
<evidence type="ECO:0000269" key="1">
    <source>
    </source>
</evidence>
<evidence type="ECO:0000269" key="2">
    <source>
    </source>
</evidence>
<evidence type="ECO:0000303" key="3">
    <source>
    </source>
</evidence>
<evidence type="ECO:0000305" key="4"/>
<evidence type="ECO:0000305" key="5">
    <source>
    </source>
</evidence>
<keyword id="KW-0027">Amidation</keyword>
<keyword id="KW-0878">Amphibian defense peptide</keyword>
<keyword id="KW-0044">Antibiotic</keyword>
<keyword id="KW-0929">Antimicrobial</keyword>
<keyword id="KW-0204">Cytolysis</keyword>
<keyword id="KW-0903">Direct protein sequencing</keyword>
<keyword id="KW-0295">Fungicide</keyword>
<keyword id="KW-0354">Hemolysis</keyword>
<keyword id="KW-0391">Immunity</keyword>
<keyword id="KW-0399">Innate immunity</keyword>
<keyword id="KW-0964">Secreted</keyword>
<proteinExistence type="evidence at protein level"/>
<name>PLS12_PHYTB</name>
<comment type="function">
    <text evidence="1 2">The amidated Phylloseptin-1.2TR has weak antimicrobial activity against Gram-negative bacterium E.coli ATCC 25922 (MIC=100 uM), Gram-positive bacterium S.epidermidis ATCC 12228 (MIC=100 uM) and against fungus C.albicans ATCC 24433 (MIC=100 uM) (PubMed:29980138). Has an anti-inflammatory effect, since it inhibits the production of the pro-inflammatory cytokines TNF-alpha and IL-1 beta, and induces the production of the anti-inflammatory cytokine IL-10 (PubMed:30734396). Has an activity of stimulation of insulin release, which may protect the species from being eaten by predators by causing fatal hypoglycemia (PubMed:30734396). Is cytotoxic to cancer line cells (PubMed:30734396). Shows moderate hemolysis on mouse erythrocytes (LC(50)=75 uM) (PubMed:30734396).</text>
</comment>
<comment type="subcellular location">
    <subcellularLocation>
        <location evidence="1">Secreted</location>
    </subcellularLocation>
</comment>
<comment type="tissue specificity">
    <text evidence="5">Expressed by the skin glands.</text>
</comment>
<comment type="PTM">
    <text evidence="4">Phylloseptin-1.2TR is amidated, whereas Phylloseptin-1.3TR is the name given to the non-amidated form.</text>
</comment>
<comment type="mass spectrometry">
    <text>amidated Phylloseptin-1.2TR.</text>
</comment>
<comment type="mass spectrometry">
    <text>non-amidated Phylloseptin-1.3TR.</text>
</comment>
<comment type="similarity">
    <text evidence="4">Belongs to the frog skin active peptide (FSAP) family. Phylloseptin subfamily.</text>
</comment>
<comment type="online information" name="The antimicrobial peptide database">
    <link uri="https://wangapd3.com/database/query_output.php?ID=02990"/>
</comment>
<feature type="peptide" id="PRO_0000445203" description="Phylloseptin-1.2TR" evidence="1">
    <location>
        <begin position="1"/>
        <end position="19"/>
    </location>
</feature>
<feature type="modified residue" description="Leucine amide; in form Phylloseptin-1.2TR" evidence="1">
    <location>
        <position position="19"/>
    </location>
</feature>
<protein>
    <recommendedName>
        <fullName evidence="3">Phylloseptin-1.2TR</fullName>
        <shortName evidence="4">PLS-1.2TR</shortName>
    </recommendedName>
    <alternativeName>
        <fullName evidence="3">Phylloseptin-1.3TR</fullName>
    </alternativeName>
</protein>
<sequence>FLSLIPKIAGGIASLVKDL</sequence>
<accession>C0HLD6</accession>